<accession>Q62420</accession>
<accession>Q3UTL7</accession>
<accession>Q3UY49</accession>
<accession>Q8BXS6</accession>
<accession>Q8VBV1</accession>
<organism>
    <name type="scientific">Mus musculus</name>
    <name type="common">Mouse</name>
    <dbReference type="NCBI Taxonomy" id="10090"/>
    <lineage>
        <taxon>Eukaryota</taxon>
        <taxon>Metazoa</taxon>
        <taxon>Chordata</taxon>
        <taxon>Craniata</taxon>
        <taxon>Vertebrata</taxon>
        <taxon>Euteleostomi</taxon>
        <taxon>Mammalia</taxon>
        <taxon>Eutheria</taxon>
        <taxon>Euarchontoglires</taxon>
        <taxon>Glires</taxon>
        <taxon>Rodentia</taxon>
        <taxon>Myomorpha</taxon>
        <taxon>Muroidea</taxon>
        <taxon>Muridae</taxon>
        <taxon>Murinae</taxon>
        <taxon>Mus</taxon>
        <taxon>Mus</taxon>
    </lineage>
</organism>
<protein>
    <recommendedName>
        <fullName evidence="16">Endophilin-A1</fullName>
    </recommendedName>
    <alternativeName>
        <fullName>Endophilin-1</fullName>
    </alternativeName>
    <alternativeName>
        <fullName>SH3 domain protein 2A</fullName>
    </alternativeName>
    <alternativeName>
        <fullName>SH3 domain-containing GRB2-like protein 2</fullName>
    </alternativeName>
    <alternativeName>
        <fullName>SH3p4</fullName>
    </alternativeName>
</protein>
<name>SH3G2_MOUSE</name>
<proteinExistence type="evidence at protein level"/>
<feature type="chain" id="PRO_0000146748" description="Endophilin-A1">
    <location>
        <begin position="1"/>
        <end position="352"/>
    </location>
</feature>
<feature type="domain" description="BAR" evidence="7">
    <location>
        <begin position="18"/>
        <end position="249"/>
    </location>
</feature>
<feature type="domain" description="SH3" evidence="6">
    <location>
        <begin position="290"/>
        <end position="349"/>
    </location>
</feature>
<feature type="region of interest" description="Binds and tubulates liposomes" evidence="1">
    <location>
        <begin position="1"/>
        <end position="125"/>
    </location>
</feature>
<feature type="region of interest" description="Disordered" evidence="8">
    <location>
        <begin position="1"/>
        <end position="27"/>
    </location>
</feature>
<feature type="region of interest" description="Membrane-binding amphipathic helix" evidence="1">
    <location>
        <begin position="1"/>
        <end position="21"/>
    </location>
</feature>
<feature type="region of interest" description="Required for dimerization upon membrane association" evidence="1">
    <location>
        <begin position="60"/>
        <end position="87"/>
    </location>
</feature>
<feature type="region of interest" description="Disordered" evidence="8">
    <location>
        <begin position="264"/>
        <end position="289"/>
    </location>
</feature>
<feature type="coiled-coil region" evidence="5">
    <location>
        <begin position="181"/>
        <end position="248"/>
    </location>
</feature>
<feature type="compositionally biased region" description="Polar residues" evidence="8">
    <location>
        <begin position="268"/>
        <end position="281"/>
    </location>
</feature>
<feature type="modified residue" description="Phosphoserine" evidence="19">
    <location>
        <position position="262"/>
    </location>
</feature>
<feature type="modified residue" description="Phosphotyrosine" evidence="3">
    <location>
        <position position="299"/>
    </location>
</feature>
<feature type="sequence conflict" description="In Ref. 3; BAC31888." evidence="17" ref="3">
    <original>K</original>
    <variation>N</variation>
    <location>
        <position position="28"/>
    </location>
</feature>
<feature type="sequence conflict" description="In Ref. 3; BAE23963." evidence="17" ref="3">
    <original>T</original>
    <variation>K</variation>
    <location>
        <position position="54"/>
    </location>
</feature>
<feature type="sequence conflict" description="In Ref. 3; BAE23963." evidence="17" ref="3">
    <original>S</original>
    <variation>G</variation>
    <location>
        <position position="69"/>
    </location>
</feature>
<feature type="sequence conflict" description="In Ref. 1; AAC71774." evidence="17" ref="1">
    <original>D</original>
    <variation>G</variation>
    <location>
        <position position="169"/>
    </location>
</feature>
<feature type="sequence conflict" description="In Ref. 1; AAC71774." evidence="17" ref="1">
    <original>F</original>
    <variation>L</variation>
    <location>
        <position position="301"/>
    </location>
</feature>
<feature type="sequence conflict" description="In Ref. 1; AAC71774." evidence="17" ref="1">
    <original>G</original>
    <variation>A</variation>
    <location>
        <position position="310"/>
    </location>
</feature>
<feature type="helix" evidence="20">
    <location>
        <begin position="31"/>
        <end position="58"/>
    </location>
</feature>
<feature type="turn" evidence="20">
    <location>
        <begin position="62"/>
        <end position="64"/>
    </location>
</feature>
<feature type="helix" evidence="20">
    <location>
        <begin position="89"/>
        <end position="104"/>
    </location>
</feature>
<feature type="strand" evidence="20">
    <location>
        <begin position="106"/>
        <end position="109"/>
    </location>
</feature>
<feature type="helix" evidence="20">
    <location>
        <begin position="110"/>
        <end position="138"/>
    </location>
</feature>
<feature type="helix" evidence="20">
    <location>
        <begin position="140"/>
        <end position="148"/>
    </location>
</feature>
<feature type="helix" evidence="20">
    <location>
        <begin position="150"/>
        <end position="173"/>
    </location>
</feature>
<feature type="turn" evidence="20">
    <location>
        <begin position="174"/>
        <end position="177"/>
    </location>
</feature>
<feature type="helix" evidence="20">
    <location>
        <begin position="180"/>
        <end position="206"/>
    </location>
</feature>
<feature type="helix" evidence="20">
    <location>
        <begin position="209"/>
        <end position="245"/>
    </location>
</feature>
<sequence>MSVAGLKKQFHKATQKVSEKVGGAEGTKLDDDFKEMERKVDVTSRAVMEIMTKTIEYLQPNPASRAKLSMINTMSKIRGQEKGPGYPQAEALLAEAMLKFGRELGDDCNFGPALGEVGEAMRELSEVKDSLDMEVKQNFIDPLQNLHDKDLREIQHHLKKLEGRRLDFDYKKKRQGKIPDEELRQALEKFDESKEIAESSMFNLLEMDIEQVSQLSALVQAQLEYHKQAVQILQQVTVRLEERIRQASSQPRREYQPKPRMSLEFATGDSTQPNGGLSHTGTPKPPGVQMDQPCCRALYDFEPENEGELGFKEGDIITLTNQIDENWYEGMLHGQSGFFPINYVEILVALPH</sequence>
<comment type="function">
    <text evidence="9 14">Implicated in synaptic vesicle endocytosis. May recruit other proteins to membranes with high curvature. Required for BDNF-dependent dendrite outgrowth (PubMed:21849472). Cooperates with SH3GL2 to mediate BDNF-NTRK2 early endocytic trafficking and signaling from early endosomes (PubMed:21849472).</text>
</comment>
<comment type="subunit">
    <text evidence="2 4 9 10 12 13 14 15">Monomer; in cytoplasm. Homodimer; when associated with membranes (By similarity). Interacts with SYNJ1 (By similarity). Interacts with DNM1 (PubMed:10490020). Interacts with MAP4K3; the interaction appears to regulate MAP4K3-mediated JNK activation (By similarity). Interacts with OPHN1 (PubMed:19481455). Interacts with PDCD6IP (By similarity). Interacts with BIN2 (By similarity). Interacts with ATXN2 (PubMed:18602463). Interacts with ADAM9 and ADAM15 cytoplasmic tails (PubMed:10531379). Interacts with TMEM108 (PubMed:21849472). Interacts with ADGRB2 (PubMed:28891236).</text>
</comment>
<comment type="interaction">
    <interactant intactId="EBI-77971">
        <id>Q62420</id>
    </interactant>
    <interactant intactId="EBI-7186684">
        <id>Q8K382</id>
        <label>Dennd1a</label>
    </interactant>
    <organismsDiffer>false</organismsDiffer>
    <experiments>2</experiments>
</comment>
<comment type="interaction">
    <interactant intactId="EBI-77971">
        <id>Q62420</id>
    </interactant>
    <interactant intactId="EBI-77971">
        <id>Q62420</id>
        <label>Sh3gl2</label>
    </interactant>
    <organismsDiffer>false</organismsDiffer>
    <experiments>2</experiments>
</comment>
<comment type="subcellular location">
    <subcellularLocation>
        <location evidence="2">Cytoplasm</location>
    </subcellularLocation>
    <subcellularLocation>
        <location evidence="2">Membrane</location>
        <topology evidence="2">Peripheral membrane protein</topology>
    </subcellularLocation>
    <subcellularLocation>
        <location evidence="14">Early endosome</location>
    </subcellularLocation>
    <subcellularLocation>
        <location evidence="2">Presynapse</location>
    </subcellularLocation>
</comment>
<comment type="domain">
    <text evidence="1 11">An N-terminal amphipathic helix, the BAR domain and a second amphipathic helix inserted into helix 1 of the BAR domain (N-BAR domain) induce membrane curvature and bind curved membranes (By similarity). The BAR domain dimer forms a rigid crescent shaped bundle of helices with the pair of second amphipathic helices protruding towards the membrane-binding surface.</text>
</comment>
<comment type="similarity">
    <text evidence="17">Belongs to the endophilin family.</text>
</comment>
<comment type="caution">
    <text evidence="18">Was originally thought to have lysophosphatidic acid acyltransferase activity, but has since been experimentally shown not to have this activity.</text>
</comment>
<reference key="1">
    <citation type="journal article" date="1996" name="Nat. Biotechnol.">
        <title>Cloning of ligand targets: systematic isolation of SH3 domain-containing proteins.</title>
        <authorList>
            <person name="Sparks A.B."/>
            <person name="Hoffman N.G."/>
            <person name="McConnell S.J."/>
            <person name="Fowlkes D.M."/>
            <person name="Kay B.K."/>
        </authorList>
    </citation>
    <scope>NUCLEOTIDE SEQUENCE [MRNA]</scope>
    <source>
        <tissue>Embryo</tissue>
    </source>
</reference>
<reference key="2">
    <citation type="journal article" date="2002" name="J. Neurosci.">
        <title>Congenic mapping of alcohol and pentobarbital withdrawal liability loci to a &lt;1 centimorgan interval of murine chromosome 4: identification of Mpdz as a candidate gene.</title>
        <authorList>
            <person name="Fehr C."/>
            <person name="Shirley R.L."/>
            <person name="Belknap J.K."/>
            <person name="Crabbe J.C."/>
            <person name="Buck K.J."/>
        </authorList>
    </citation>
    <scope>NUCLEOTIDE SEQUENCE [MRNA]</scope>
    <source>
        <strain>C57BL/6J</strain>
        <strain>DBA/2J</strain>
        <tissue>Brain</tissue>
    </source>
</reference>
<reference key="3">
    <citation type="journal article" date="2005" name="Science">
        <title>The transcriptional landscape of the mammalian genome.</title>
        <authorList>
            <person name="Carninci P."/>
            <person name="Kasukawa T."/>
            <person name="Katayama S."/>
            <person name="Gough J."/>
            <person name="Frith M.C."/>
            <person name="Maeda N."/>
            <person name="Oyama R."/>
            <person name="Ravasi T."/>
            <person name="Lenhard B."/>
            <person name="Wells C."/>
            <person name="Kodzius R."/>
            <person name="Shimokawa K."/>
            <person name="Bajic V.B."/>
            <person name="Brenner S.E."/>
            <person name="Batalov S."/>
            <person name="Forrest A.R."/>
            <person name="Zavolan M."/>
            <person name="Davis M.J."/>
            <person name="Wilming L.G."/>
            <person name="Aidinis V."/>
            <person name="Allen J.E."/>
            <person name="Ambesi-Impiombato A."/>
            <person name="Apweiler R."/>
            <person name="Aturaliya R.N."/>
            <person name="Bailey T.L."/>
            <person name="Bansal M."/>
            <person name="Baxter L."/>
            <person name="Beisel K.W."/>
            <person name="Bersano T."/>
            <person name="Bono H."/>
            <person name="Chalk A.M."/>
            <person name="Chiu K.P."/>
            <person name="Choudhary V."/>
            <person name="Christoffels A."/>
            <person name="Clutterbuck D.R."/>
            <person name="Crowe M.L."/>
            <person name="Dalla E."/>
            <person name="Dalrymple B.P."/>
            <person name="de Bono B."/>
            <person name="Della Gatta G."/>
            <person name="di Bernardo D."/>
            <person name="Down T."/>
            <person name="Engstrom P."/>
            <person name="Fagiolini M."/>
            <person name="Faulkner G."/>
            <person name="Fletcher C.F."/>
            <person name="Fukushima T."/>
            <person name="Furuno M."/>
            <person name="Futaki S."/>
            <person name="Gariboldi M."/>
            <person name="Georgii-Hemming P."/>
            <person name="Gingeras T.R."/>
            <person name="Gojobori T."/>
            <person name="Green R.E."/>
            <person name="Gustincich S."/>
            <person name="Harbers M."/>
            <person name="Hayashi Y."/>
            <person name="Hensch T.K."/>
            <person name="Hirokawa N."/>
            <person name="Hill D."/>
            <person name="Huminiecki L."/>
            <person name="Iacono M."/>
            <person name="Ikeo K."/>
            <person name="Iwama A."/>
            <person name="Ishikawa T."/>
            <person name="Jakt M."/>
            <person name="Kanapin A."/>
            <person name="Katoh M."/>
            <person name="Kawasawa Y."/>
            <person name="Kelso J."/>
            <person name="Kitamura H."/>
            <person name="Kitano H."/>
            <person name="Kollias G."/>
            <person name="Krishnan S.P."/>
            <person name="Kruger A."/>
            <person name="Kummerfeld S.K."/>
            <person name="Kurochkin I.V."/>
            <person name="Lareau L.F."/>
            <person name="Lazarevic D."/>
            <person name="Lipovich L."/>
            <person name="Liu J."/>
            <person name="Liuni S."/>
            <person name="McWilliam S."/>
            <person name="Madan Babu M."/>
            <person name="Madera M."/>
            <person name="Marchionni L."/>
            <person name="Matsuda H."/>
            <person name="Matsuzawa S."/>
            <person name="Miki H."/>
            <person name="Mignone F."/>
            <person name="Miyake S."/>
            <person name="Morris K."/>
            <person name="Mottagui-Tabar S."/>
            <person name="Mulder N."/>
            <person name="Nakano N."/>
            <person name="Nakauchi H."/>
            <person name="Ng P."/>
            <person name="Nilsson R."/>
            <person name="Nishiguchi S."/>
            <person name="Nishikawa S."/>
            <person name="Nori F."/>
            <person name="Ohara O."/>
            <person name="Okazaki Y."/>
            <person name="Orlando V."/>
            <person name="Pang K.C."/>
            <person name="Pavan W.J."/>
            <person name="Pavesi G."/>
            <person name="Pesole G."/>
            <person name="Petrovsky N."/>
            <person name="Piazza S."/>
            <person name="Reed J."/>
            <person name="Reid J.F."/>
            <person name="Ring B.Z."/>
            <person name="Ringwald M."/>
            <person name="Rost B."/>
            <person name="Ruan Y."/>
            <person name="Salzberg S.L."/>
            <person name="Sandelin A."/>
            <person name="Schneider C."/>
            <person name="Schoenbach C."/>
            <person name="Sekiguchi K."/>
            <person name="Semple C.A."/>
            <person name="Seno S."/>
            <person name="Sessa L."/>
            <person name="Sheng Y."/>
            <person name="Shibata Y."/>
            <person name="Shimada H."/>
            <person name="Shimada K."/>
            <person name="Silva D."/>
            <person name="Sinclair B."/>
            <person name="Sperling S."/>
            <person name="Stupka E."/>
            <person name="Sugiura K."/>
            <person name="Sultana R."/>
            <person name="Takenaka Y."/>
            <person name="Taki K."/>
            <person name="Tammoja K."/>
            <person name="Tan S.L."/>
            <person name="Tang S."/>
            <person name="Taylor M.S."/>
            <person name="Tegner J."/>
            <person name="Teichmann S.A."/>
            <person name="Ueda H.R."/>
            <person name="van Nimwegen E."/>
            <person name="Verardo R."/>
            <person name="Wei C.L."/>
            <person name="Yagi K."/>
            <person name="Yamanishi H."/>
            <person name="Zabarovsky E."/>
            <person name="Zhu S."/>
            <person name="Zimmer A."/>
            <person name="Hide W."/>
            <person name="Bult C."/>
            <person name="Grimmond S.M."/>
            <person name="Teasdale R.D."/>
            <person name="Liu E.T."/>
            <person name="Brusic V."/>
            <person name="Quackenbush J."/>
            <person name="Wahlestedt C."/>
            <person name="Mattick J.S."/>
            <person name="Hume D.A."/>
            <person name="Kai C."/>
            <person name="Sasaki D."/>
            <person name="Tomaru Y."/>
            <person name="Fukuda S."/>
            <person name="Kanamori-Katayama M."/>
            <person name="Suzuki M."/>
            <person name="Aoki J."/>
            <person name="Arakawa T."/>
            <person name="Iida J."/>
            <person name="Imamura K."/>
            <person name="Itoh M."/>
            <person name="Kato T."/>
            <person name="Kawaji H."/>
            <person name="Kawagashira N."/>
            <person name="Kawashima T."/>
            <person name="Kojima M."/>
            <person name="Kondo S."/>
            <person name="Konno H."/>
            <person name="Nakano K."/>
            <person name="Ninomiya N."/>
            <person name="Nishio T."/>
            <person name="Okada M."/>
            <person name="Plessy C."/>
            <person name="Shibata K."/>
            <person name="Shiraki T."/>
            <person name="Suzuki S."/>
            <person name="Tagami M."/>
            <person name="Waki K."/>
            <person name="Watahiki A."/>
            <person name="Okamura-Oho Y."/>
            <person name="Suzuki H."/>
            <person name="Kawai J."/>
            <person name="Hayashizaki Y."/>
        </authorList>
    </citation>
    <scope>NUCLEOTIDE SEQUENCE [LARGE SCALE MRNA]</scope>
    <source>
        <strain>C57BL/6J</strain>
        <tissue>Brain cortex</tissue>
        <tissue>Olfactory bulb</tissue>
        <tissue>Retina</tissue>
    </source>
</reference>
<reference key="4">
    <citation type="journal article" date="2009" name="PLoS Biol.">
        <title>Lineage-specific biology revealed by a finished genome assembly of the mouse.</title>
        <authorList>
            <person name="Church D.M."/>
            <person name="Goodstadt L."/>
            <person name="Hillier L.W."/>
            <person name="Zody M.C."/>
            <person name="Goldstein S."/>
            <person name="She X."/>
            <person name="Bult C.J."/>
            <person name="Agarwala R."/>
            <person name="Cherry J.L."/>
            <person name="DiCuccio M."/>
            <person name="Hlavina W."/>
            <person name="Kapustin Y."/>
            <person name="Meric P."/>
            <person name="Maglott D."/>
            <person name="Birtle Z."/>
            <person name="Marques A.C."/>
            <person name="Graves T."/>
            <person name="Zhou S."/>
            <person name="Teague B."/>
            <person name="Potamousis K."/>
            <person name="Churas C."/>
            <person name="Place M."/>
            <person name="Herschleb J."/>
            <person name="Runnheim R."/>
            <person name="Forrest D."/>
            <person name="Amos-Landgraf J."/>
            <person name="Schwartz D.C."/>
            <person name="Cheng Z."/>
            <person name="Lindblad-Toh K."/>
            <person name="Eichler E.E."/>
            <person name="Ponting C.P."/>
        </authorList>
    </citation>
    <scope>NUCLEOTIDE SEQUENCE [LARGE SCALE GENOMIC DNA]</scope>
    <source>
        <strain>C57BL/6J</strain>
    </source>
</reference>
<reference key="5">
    <citation type="journal article" date="2004" name="Genome Res.">
        <title>The status, quality, and expansion of the NIH full-length cDNA project: the Mammalian Gene Collection (MGC).</title>
        <authorList>
            <consortium name="The MGC Project Team"/>
        </authorList>
    </citation>
    <scope>NUCLEOTIDE SEQUENCE [LARGE SCALE MRNA]</scope>
    <source>
        <strain>C57BL/6J</strain>
        <tissue>Retina</tissue>
    </source>
</reference>
<reference key="6">
    <citation type="submission" date="2009-01" db="UniProtKB">
        <authorList>
            <person name="Lubec G."/>
            <person name="Klug S."/>
            <person name="Sunyer B."/>
            <person name="Chen W.-Q."/>
        </authorList>
    </citation>
    <scope>PROTEIN SEQUENCE OF 54-65; 228-239 AND 297-312</scope>
    <scope>IDENTIFICATION BY MASS SPECTROMETRY</scope>
    <source>
        <strain>OF1</strain>
        <tissue>Hippocampus</tissue>
    </source>
</reference>
<reference key="7">
    <citation type="journal article" date="1999" name="J. Biol. Chem.">
        <title>Interaction of the metalloprotease disintegrins MDC9 and MDC15 with two SH3 domain-containing proteins, endophilin I and SH3PX1.</title>
        <authorList>
            <person name="Howard L."/>
            <person name="Nelson K.K."/>
            <person name="Maciewicz R.A."/>
            <person name="Blobel C.P."/>
        </authorList>
    </citation>
    <scope>INTERACTION WITH ADAM9 AND ADAM15</scope>
</reference>
<reference key="8">
    <citation type="journal article" date="1999" name="Nature">
        <title>Endophilin I mediates synaptic vesicle formation by transfer of arachidonate to lysophosphatidic acid.</title>
        <authorList>
            <person name="Schmidt A."/>
            <person name="Wolde M."/>
            <person name="Thiele C."/>
            <person name="Fest W."/>
            <person name="Kratzin H."/>
            <person name="Podtelejnikov A.V."/>
            <person name="Witke W."/>
            <person name="Huttner W.B."/>
            <person name="Soeling H.-D."/>
        </authorList>
    </citation>
    <scope>FUNCTION</scope>
    <scope>INTERACTION WITH DNM1</scope>
</reference>
<reference key="9">
    <citation type="journal article" date="2008" name="Cell. Signal.">
        <title>Ataxin-2 associates with the endocytosis complex and affects EGF receptor trafficking.</title>
        <authorList>
            <person name="Nonis D."/>
            <person name="Schmidt M.H."/>
            <person name="van de Loo S."/>
            <person name="Eich F."/>
            <person name="Dikic I."/>
            <person name="Nowock J."/>
            <person name="Auburger G."/>
        </authorList>
    </citation>
    <scope>INTERACTION WITH ATXN2</scope>
</reference>
<reference key="10">
    <citation type="journal article" date="2009" name="Curr. Biol.">
        <title>The Rho-linked mental retardation protein OPHN1 controls synaptic vesicle endocytosis via endophilin A1.</title>
        <authorList>
            <person name="Nakano-Kobayashi A."/>
            <person name="Kasri N.N."/>
            <person name="Newey S.E."/>
            <person name="Van Aelst L."/>
        </authorList>
    </citation>
    <scope>INTERACTION WITH OPHN1</scope>
</reference>
<reference key="11">
    <citation type="journal article" date="2010" name="Cell">
        <title>A tissue-specific atlas of mouse protein phosphorylation and expression.</title>
        <authorList>
            <person name="Huttlin E.L."/>
            <person name="Jedrychowski M.P."/>
            <person name="Elias J.E."/>
            <person name="Goswami T."/>
            <person name="Rad R."/>
            <person name="Beausoleil S.A."/>
            <person name="Villen J."/>
            <person name="Haas W."/>
            <person name="Sowa M.E."/>
            <person name="Gygi S.P."/>
        </authorList>
    </citation>
    <scope>PHOSPHORYLATION [LARGE SCALE ANALYSIS] AT SER-262</scope>
    <scope>IDENTIFICATION BY MASS SPECTROMETRY [LARGE SCALE ANALYSIS]</scope>
    <source>
        <tissue>Brain</tissue>
        <tissue>Testis</tissue>
    </source>
</reference>
<reference key="12">
    <citation type="journal article" date="2011" name="Mol. Biol. Cell">
        <title>Retrolinkin cooperates with endophilin A1 to mediate BDNF-TrkB early endocytic trafficking and signaling from early endosomes.</title>
        <authorList>
            <person name="Fu X."/>
            <person name="Yang Y."/>
            <person name="Xu C."/>
            <person name="Niu Y."/>
            <person name="Chen T."/>
            <person name="Zhou Q."/>
            <person name="Liu J.J."/>
        </authorList>
    </citation>
    <scope>FUNCTION</scope>
    <scope>INTERACTION WITH TMEM108</scope>
    <scope>SUBCELLULAR LOCATION</scope>
</reference>
<reference key="13">
    <citation type="journal article" date="2005" name="J. Mol. Biol.">
        <title>Crystal structure of the endophilin-A1 BAR domain.</title>
        <authorList>
            <person name="Weissenhorn W."/>
        </authorList>
    </citation>
    <scope>X-RAY CRYSTALLOGRAPHY (2.3 ANGSTROMS) OF 1-256</scope>
    <scope>DOMAIN</scope>
</reference>
<reference key="14">
    <citation type="journal article" date="2017" name="Hum. Mutat.">
        <title>A disease-associated mutation in the adhesion GPCR BAI2 (ADGRB2) increases receptor signaling activity.</title>
        <authorList>
            <person name="Purcell R.H."/>
            <person name="Toro C."/>
            <person name="Gahl W.A."/>
            <person name="Hall R.A."/>
        </authorList>
    </citation>
    <scope>INTERACTION WITH ADGRB2</scope>
</reference>
<evidence type="ECO:0000250" key="1"/>
<evidence type="ECO:0000250" key="2">
    <source>
        <dbReference type="UniProtKB" id="O35179"/>
    </source>
</evidence>
<evidence type="ECO:0000250" key="3">
    <source>
        <dbReference type="UniProtKB" id="Q62419"/>
    </source>
</evidence>
<evidence type="ECO:0000250" key="4">
    <source>
        <dbReference type="UniProtKB" id="Q99962"/>
    </source>
</evidence>
<evidence type="ECO:0000255" key="5"/>
<evidence type="ECO:0000255" key="6">
    <source>
        <dbReference type="PROSITE-ProRule" id="PRU00192"/>
    </source>
</evidence>
<evidence type="ECO:0000255" key="7">
    <source>
        <dbReference type="PROSITE-ProRule" id="PRU00361"/>
    </source>
</evidence>
<evidence type="ECO:0000256" key="8">
    <source>
        <dbReference type="SAM" id="MobiDB-lite"/>
    </source>
</evidence>
<evidence type="ECO:0000269" key="9">
    <source>
    </source>
</evidence>
<evidence type="ECO:0000269" key="10">
    <source>
    </source>
</evidence>
<evidence type="ECO:0000269" key="11">
    <source>
    </source>
</evidence>
<evidence type="ECO:0000269" key="12">
    <source>
    </source>
</evidence>
<evidence type="ECO:0000269" key="13">
    <source>
    </source>
</evidence>
<evidence type="ECO:0000269" key="14">
    <source>
    </source>
</evidence>
<evidence type="ECO:0000269" key="15">
    <source>
    </source>
</evidence>
<evidence type="ECO:0000303" key="16">
    <source>
    </source>
</evidence>
<evidence type="ECO:0000305" key="17"/>
<evidence type="ECO:0000305" key="18">
    <source>
    </source>
</evidence>
<evidence type="ECO:0007744" key="19">
    <source>
    </source>
</evidence>
<evidence type="ECO:0007829" key="20">
    <source>
        <dbReference type="PDB" id="1ZWW"/>
    </source>
</evidence>
<dbReference type="EMBL" id="U58886">
    <property type="protein sequence ID" value="AAC71774.1"/>
    <property type="molecule type" value="mRNA"/>
</dbReference>
<dbReference type="EMBL" id="AF326561">
    <property type="protein sequence ID" value="AAL37407.1"/>
    <property type="molecule type" value="mRNA"/>
</dbReference>
<dbReference type="EMBL" id="AF326562">
    <property type="protein sequence ID" value="AAL37408.1"/>
    <property type="molecule type" value="mRNA"/>
</dbReference>
<dbReference type="EMBL" id="AK044370">
    <property type="protein sequence ID" value="BAC31888.1"/>
    <property type="molecule type" value="mRNA"/>
</dbReference>
<dbReference type="EMBL" id="AK134970">
    <property type="protein sequence ID" value="BAE22364.1"/>
    <property type="molecule type" value="mRNA"/>
</dbReference>
<dbReference type="EMBL" id="AK139337">
    <property type="protein sequence ID" value="BAE23963.1"/>
    <property type="molecule type" value="mRNA"/>
</dbReference>
<dbReference type="EMBL" id="AL805970">
    <property type="status" value="NOT_ANNOTATED_CDS"/>
    <property type="molecule type" value="Genomic_DNA"/>
</dbReference>
<dbReference type="EMBL" id="AL806524">
    <property type="status" value="NOT_ANNOTATED_CDS"/>
    <property type="molecule type" value="Genomic_DNA"/>
</dbReference>
<dbReference type="EMBL" id="BC018385">
    <property type="protein sequence ID" value="AAH18385.1"/>
    <property type="molecule type" value="mRNA"/>
</dbReference>
<dbReference type="CCDS" id="CCDS18303.1"/>
<dbReference type="RefSeq" id="NP_062408.2">
    <property type="nucleotide sequence ID" value="NM_019535.2"/>
</dbReference>
<dbReference type="PDB" id="1ZWW">
    <property type="method" value="X-ray"/>
    <property type="resolution" value="2.30 A"/>
    <property type="chains" value="A/B=1-256"/>
</dbReference>
<dbReference type="PDBsum" id="1ZWW"/>
<dbReference type="BMRB" id="Q62420"/>
<dbReference type="SMR" id="Q62420"/>
<dbReference type="BioGRID" id="203206">
    <property type="interactions" value="26"/>
</dbReference>
<dbReference type="DIP" id="DIP-30992N"/>
<dbReference type="FunCoup" id="Q62420">
    <property type="interactions" value="747"/>
</dbReference>
<dbReference type="IntAct" id="Q62420">
    <property type="interactions" value="16"/>
</dbReference>
<dbReference type="MINT" id="Q62420"/>
<dbReference type="STRING" id="10090.ENSMUSP00000030212"/>
<dbReference type="TCDB" id="8.A.34.1.1">
    <property type="family name" value="the endophilin (endophilin) family"/>
</dbReference>
<dbReference type="iPTMnet" id="Q62420"/>
<dbReference type="PhosphoSitePlus" id="Q62420"/>
<dbReference type="SwissPalm" id="Q62420"/>
<dbReference type="jPOST" id="Q62420"/>
<dbReference type="PaxDb" id="10090-ENSMUSP00000030212"/>
<dbReference type="ProteomicsDB" id="257220"/>
<dbReference type="Antibodypedia" id="4106">
    <property type="antibodies" value="346 antibodies from 36 providers"/>
</dbReference>
<dbReference type="DNASU" id="20404"/>
<dbReference type="Ensembl" id="ENSMUST00000030212.15">
    <property type="protein sequence ID" value="ENSMUSP00000030212.9"/>
    <property type="gene ID" value="ENSMUSG00000028488.16"/>
</dbReference>
<dbReference type="GeneID" id="20404"/>
<dbReference type="KEGG" id="mmu:20404"/>
<dbReference type="UCSC" id="uc008tlo.1">
    <property type="organism name" value="mouse"/>
</dbReference>
<dbReference type="AGR" id="MGI:700009"/>
<dbReference type="CTD" id="6456"/>
<dbReference type="MGI" id="MGI:700009">
    <property type="gene designation" value="Sh3gl2"/>
</dbReference>
<dbReference type="VEuPathDB" id="HostDB:ENSMUSG00000028488"/>
<dbReference type="eggNOG" id="KOG1118">
    <property type="taxonomic scope" value="Eukaryota"/>
</dbReference>
<dbReference type="GeneTree" id="ENSGT00940000160529"/>
<dbReference type="HOGENOM" id="CLU_047887_0_0_1"/>
<dbReference type="InParanoid" id="Q62420"/>
<dbReference type="OMA" id="IQPRREY"/>
<dbReference type="OrthoDB" id="14166at9989"/>
<dbReference type="TreeFam" id="TF313281"/>
<dbReference type="Reactome" id="R-MMU-177504">
    <property type="pathway name" value="Retrograde neurotrophin signalling"/>
</dbReference>
<dbReference type="Reactome" id="R-MMU-182971">
    <property type="pathway name" value="EGFR downregulation"/>
</dbReference>
<dbReference type="Reactome" id="R-MMU-2132295">
    <property type="pathway name" value="MHC class II antigen presentation"/>
</dbReference>
<dbReference type="Reactome" id="R-MMU-432720">
    <property type="pathway name" value="Lysosome Vesicle Biogenesis"/>
</dbReference>
<dbReference type="Reactome" id="R-MMU-432722">
    <property type="pathway name" value="Golgi Associated Vesicle Biogenesis"/>
</dbReference>
<dbReference type="Reactome" id="R-MMU-437239">
    <property type="pathway name" value="Recycling pathway of L1"/>
</dbReference>
<dbReference type="Reactome" id="R-MMU-6807004">
    <property type="pathway name" value="Negative regulation of MET activity"/>
</dbReference>
<dbReference type="Reactome" id="R-MMU-8856825">
    <property type="pathway name" value="Cargo recognition for clathrin-mediated endocytosis"/>
</dbReference>
<dbReference type="Reactome" id="R-MMU-8856828">
    <property type="pathway name" value="Clathrin-mediated endocytosis"/>
</dbReference>
<dbReference type="BioGRID-ORCS" id="20404">
    <property type="hits" value="4 hits in 79 CRISPR screens"/>
</dbReference>
<dbReference type="CD-CODE" id="CE726F99">
    <property type="entry name" value="Postsynaptic density"/>
</dbReference>
<dbReference type="ChiTaRS" id="Sh3gl2">
    <property type="organism name" value="mouse"/>
</dbReference>
<dbReference type="EvolutionaryTrace" id="Q62420"/>
<dbReference type="PRO" id="PR:Q62420"/>
<dbReference type="Proteomes" id="UP000000589">
    <property type="component" value="Chromosome 4"/>
</dbReference>
<dbReference type="RNAct" id="Q62420">
    <property type="molecule type" value="protein"/>
</dbReference>
<dbReference type="Bgee" id="ENSMUSG00000028488">
    <property type="expression patterns" value="Expressed in urinary bladder urothelium and 205 other cell types or tissues"/>
</dbReference>
<dbReference type="ExpressionAtlas" id="Q62420">
    <property type="expression patterns" value="baseline and differential"/>
</dbReference>
<dbReference type="GO" id="GO:0042995">
    <property type="term" value="C:cell projection"/>
    <property type="evidence" value="ECO:0007669"/>
    <property type="project" value="UniProtKB-KW"/>
</dbReference>
<dbReference type="GO" id="GO:0005769">
    <property type="term" value="C:early endosome"/>
    <property type="evidence" value="ECO:0000314"/>
    <property type="project" value="UniProtKB"/>
</dbReference>
<dbReference type="GO" id="GO:0098978">
    <property type="term" value="C:glutamatergic synapse"/>
    <property type="evidence" value="ECO:0000314"/>
    <property type="project" value="SynGO"/>
</dbReference>
<dbReference type="GO" id="GO:0016020">
    <property type="term" value="C:membrane"/>
    <property type="evidence" value="ECO:0007669"/>
    <property type="project" value="UniProtKB-SubCell"/>
</dbReference>
<dbReference type="GO" id="GO:0048471">
    <property type="term" value="C:perinuclear region of cytoplasm"/>
    <property type="evidence" value="ECO:0007669"/>
    <property type="project" value="Ensembl"/>
</dbReference>
<dbReference type="GO" id="GO:0098684">
    <property type="term" value="C:photoreceptor ribbon synapse"/>
    <property type="evidence" value="ECO:0000314"/>
    <property type="project" value="SynGO"/>
</dbReference>
<dbReference type="GO" id="GO:0098794">
    <property type="term" value="C:postsynapse"/>
    <property type="evidence" value="ECO:0000314"/>
    <property type="project" value="SynGO"/>
</dbReference>
<dbReference type="GO" id="GO:0099523">
    <property type="term" value="C:presynaptic cytosol"/>
    <property type="evidence" value="ECO:0000314"/>
    <property type="project" value="SynGO"/>
</dbReference>
<dbReference type="GO" id="GO:0042802">
    <property type="term" value="F:identical protein binding"/>
    <property type="evidence" value="ECO:0000353"/>
    <property type="project" value="IntAct"/>
</dbReference>
<dbReference type="GO" id="GO:0008289">
    <property type="term" value="F:lipid binding"/>
    <property type="evidence" value="ECO:0007669"/>
    <property type="project" value="UniProtKB-KW"/>
</dbReference>
<dbReference type="GO" id="GO:1990416">
    <property type="term" value="P:cellular response to brain-derived neurotrophic factor stimulus"/>
    <property type="evidence" value="ECO:0000315"/>
    <property type="project" value="UniProtKB"/>
</dbReference>
<dbReference type="GO" id="GO:0097484">
    <property type="term" value="P:dendrite extension"/>
    <property type="evidence" value="ECO:0000315"/>
    <property type="project" value="UniProtKB"/>
</dbReference>
<dbReference type="GO" id="GO:1905604">
    <property type="term" value="P:negative regulation of blood-brain barrier permeability"/>
    <property type="evidence" value="ECO:0007669"/>
    <property type="project" value="Ensembl"/>
</dbReference>
<dbReference type="GO" id="GO:0042059">
    <property type="term" value="P:negative regulation of epidermal growth factor receptor signaling pathway"/>
    <property type="evidence" value="ECO:0007669"/>
    <property type="project" value="Ensembl"/>
</dbReference>
<dbReference type="GO" id="GO:0010629">
    <property type="term" value="P:negative regulation of gene expression"/>
    <property type="evidence" value="ECO:0007669"/>
    <property type="project" value="Ensembl"/>
</dbReference>
<dbReference type="GO" id="GO:0043409">
    <property type="term" value="P:negative regulation of MAPK cascade"/>
    <property type="evidence" value="ECO:0007669"/>
    <property type="project" value="Ensembl"/>
</dbReference>
<dbReference type="GO" id="GO:0031175">
    <property type="term" value="P:neuron projection development"/>
    <property type="evidence" value="ECO:0000315"/>
    <property type="project" value="UniProtKB"/>
</dbReference>
<dbReference type="GO" id="GO:0098974">
    <property type="term" value="P:postsynaptic actin cytoskeleton organization"/>
    <property type="evidence" value="ECO:0000314"/>
    <property type="project" value="SynGO"/>
</dbReference>
<dbReference type="GO" id="GO:0002090">
    <property type="term" value="P:regulation of receptor internalization"/>
    <property type="evidence" value="ECO:0000314"/>
    <property type="project" value="MGI"/>
</dbReference>
<dbReference type="GO" id="GO:0048488">
    <property type="term" value="P:synaptic vesicle endocytosis"/>
    <property type="evidence" value="ECO:0000316"/>
    <property type="project" value="MGI"/>
</dbReference>
<dbReference type="CDD" id="cd07613">
    <property type="entry name" value="BAR_Endophilin_A1"/>
    <property type="match status" value="1"/>
</dbReference>
<dbReference type="CDD" id="cd11803">
    <property type="entry name" value="SH3_Endophilin_A"/>
    <property type="match status" value="1"/>
</dbReference>
<dbReference type="DisProt" id="DP02819"/>
<dbReference type="FunFam" id="2.30.30.40:FF:000053">
    <property type="entry name" value="endophilin-A1 isoform X2"/>
    <property type="match status" value="1"/>
</dbReference>
<dbReference type="FunFam" id="1.20.1270.60:FF:000021">
    <property type="entry name" value="Endophilin-A2 isoform 1"/>
    <property type="match status" value="1"/>
</dbReference>
<dbReference type="Gene3D" id="1.20.1270.60">
    <property type="entry name" value="Arfaptin homology (AH) domain/BAR domain"/>
    <property type="match status" value="1"/>
</dbReference>
<dbReference type="Gene3D" id="2.30.30.40">
    <property type="entry name" value="SH3 Domains"/>
    <property type="match status" value="1"/>
</dbReference>
<dbReference type="InterPro" id="IPR027267">
    <property type="entry name" value="AH/BAR_dom_sf"/>
</dbReference>
<dbReference type="InterPro" id="IPR004148">
    <property type="entry name" value="BAR_dom"/>
</dbReference>
<dbReference type="InterPro" id="IPR035824">
    <property type="entry name" value="Endophilin_A_SH3"/>
</dbReference>
<dbReference type="InterPro" id="IPR050384">
    <property type="entry name" value="Endophilin_SH3RF"/>
</dbReference>
<dbReference type="InterPro" id="IPR036028">
    <property type="entry name" value="SH3-like_dom_sf"/>
</dbReference>
<dbReference type="InterPro" id="IPR001452">
    <property type="entry name" value="SH3_domain"/>
</dbReference>
<dbReference type="PANTHER" id="PTHR14167:SF50">
    <property type="entry name" value="ENDOPHILIN-A1"/>
    <property type="match status" value="1"/>
</dbReference>
<dbReference type="PANTHER" id="PTHR14167">
    <property type="entry name" value="SH3 DOMAIN-CONTAINING"/>
    <property type="match status" value="1"/>
</dbReference>
<dbReference type="Pfam" id="PF03114">
    <property type="entry name" value="BAR"/>
    <property type="match status" value="1"/>
</dbReference>
<dbReference type="Pfam" id="PF00018">
    <property type="entry name" value="SH3_1"/>
    <property type="match status" value="1"/>
</dbReference>
<dbReference type="PRINTS" id="PR00452">
    <property type="entry name" value="SH3DOMAIN"/>
</dbReference>
<dbReference type="PRINTS" id="PR01887">
    <property type="entry name" value="SPECTRNALPHA"/>
</dbReference>
<dbReference type="SMART" id="SM00721">
    <property type="entry name" value="BAR"/>
    <property type="match status" value="1"/>
</dbReference>
<dbReference type="SMART" id="SM00326">
    <property type="entry name" value="SH3"/>
    <property type="match status" value="1"/>
</dbReference>
<dbReference type="SUPFAM" id="SSF103657">
    <property type="entry name" value="BAR/IMD domain-like"/>
    <property type="match status" value="1"/>
</dbReference>
<dbReference type="SUPFAM" id="SSF50044">
    <property type="entry name" value="SH3-domain"/>
    <property type="match status" value="1"/>
</dbReference>
<dbReference type="PROSITE" id="PS51021">
    <property type="entry name" value="BAR"/>
    <property type="match status" value="1"/>
</dbReference>
<dbReference type="PROSITE" id="PS50002">
    <property type="entry name" value="SH3"/>
    <property type="match status" value="1"/>
</dbReference>
<gene>
    <name type="primary">Sh3gl2</name>
    <name evidence="16" type="synonym">Een1</name>
    <name type="synonym">Sh3d2a</name>
</gene>
<keyword id="KW-0002">3D-structure</keyword>
<keyword id="KW-0966">Cell projection</keyword>
<keyword id="KW-0175">Coiled coil</keyword>
<keyword id="KW-0963">Cytoplasm</keyword>
<keyword id="KW-0903">Direct protein sequencing</keyword>
<keyword id="KW-0254">Endocytosis</keyword>
<keyword id="KW-0967">Endosome</keyword>
<keyword id="KW-0446">Lipid-binding</keyword>
<keyword id="KW-0472">Membrane</keyword>
<keyword id="KW-0597">Phosphoprotein</keyword>
<keyword id="KW-1185">Reference proteome</keyword>
<keyword id="KW-0728">SH3 domain</keyword>
<keyword id="KW-0770">Synapse</keyword>